<evidence type="ECO:0000255" key="1">
    <source>
        <dbReference type="HAMAP-Rule" id="MF_01198"/>
    </source>
</evidence>
<keyword id="KW-0175">Coiled coil</keyword>
<keyword id="KW-0963">Cytoplasm</keyword>
<keyword id="KW-1185">Reference proteome</keyword>
<keyword id="KW-0346">Stress response</keyword>
<proteinExistence type="inferred from homology"/>
<organism>
    <name type="scientific">Escherichia coli O127:H6 (strain E2348/69 / EPEC)</name>
    <dbReference type="NCBI Taxonomy" id="574521"/>
    <lineage>
        <taxon>Bacteria</taxon>
        <taxon>Pseudomonadati</taxon>
        <taxon>Pseudomonadota</taxon>
        <taxon>Gammaproteobacteria</taxon>
        <taxon>Enterobacterales</taxon>
        <taxon>Enterobacteriaceae</taxon>
        <taxon>Escherichia</taxon>
    </lineage>
</organism>
<dbReference type="EMBL" id="FM180568">
    <property type="protein sequence ID" value="CAS07866.1"/>
    <property type="molecule type" value="Genomic_DNA"/>
</dbReference>
<dbReference type="RefSeq" id="WP_000792973.1">
    <property type="nucleotide sequence ID" value="NC_011601.1"/>
</dbReference>
<dbReference type="SMR" id="B7UJK6"/>
<dbReference type="KEGG" id="ecg:E2348C_0318"/>
<dbReference type="HOGENOM" id="CLU_169517_0_0_6"/>
<dbReference type="Proteomes" id="UP000008205">
    <property type="component" value="Chromosome"/>
</dbReference>
<dbReference type="GO" id="GO:0005737">
    <property type="term" value="C:cytoplasm"/>
    <property type="evidence" value="ECO:0007669"/>
    <property type="project" value="UniProtKB-SubCell"/>
</dbReference>
<dbReference type="GO" id="GO:0009267">
    <property type="term" value="P:cellular response to starvation"/>
    <property type="evidence" value="ECO:0007669"/>
    <property type="project" value="UniProtKB-UniRule"/>
</dbReference>
<dbReference type="HAMAP" id="MF_01198">
    <property type="entry name" value="Anti_adapt_IraP"/>
    <property type="match status" value="1"/>
</dbReference>
<dbReference type="InterPro" id="IPR019732">
    <property type="entry name" value="SigmaS_Anti-adapt_IraP"/>
</dbReference>
<dbReference type="NCBIfam" id="NF007598">
    <property type="entry name" value="PRK10244.1"/>
    <property type="match status" value="1"/>
</dbReference>
<dbReference type="Pfam" id="PF10796">
    <property type="entry name" value="Anti-adapt_IraP"/>
    <property type="match status" value="1"/>
</dbReference>
<protein>
    <recommendedName>
        <fullName evidence="1">Anti-adapter protein IraP</fullName>
    </recommendedName>
</protein>
<name>IRAP_ECO27</name>
<reference key="1">
    <citation type="journal article" date="2009" name="J. Bacteriol.">
        <title>Complete genome sequence and comparative genome analysis of enteropathogenic Escherichia coli O127:H6 strain E2348/69.</title>
        <authorList>
            <person name="Iguchi A."/>
            <person name="Thomson N.R."/>
            <person name="Ogura Y."/>
            <person name="Saunders D."/>
            <person name="Ooka T."/>
            <person name="Henderson I.R."/>
            <person name="Harris D."/>
            <person name="Asadulghani M."/>
            <person name="Kurokawa K."/>
            <person name="Dean P."/>
            <person name="Kenny B."/>
            <person name="Quail M.A."/>
            <person name="Thurston S."/>
            <person name="Dougan G."/>
            <person name="Hayashi T."/>
            <person name="Parkhill J."/>
            <person name="Frankel G."/>
        </authorList>
    </citation>
    <scope>NUCLEOTIDE SEQUENCE [LARGE SCALE GENOMIC DNA]</scope>
    <source>
        <strain>E2348/69 / EPEC</strain>
    </source>
</reference>
<comment type="function">
    <text evidence="1">Inhibits RpoS proteolysis by regulating RssB activity, thereby increasing the stability of the sigma stress factor RpoS especially during phosphate starvation, but also in stationary phase and during nitrogen starvation. Its effect on RpoS stability is due to its interaction with RssB, which probably blocks the interaction of RssB with RpoS, and the consequent delivery of the RssB-RpoS complex to the ClpXP protein degradation pathway.</text>
</comment>
<comment type="subunit">
    <text evidence="1">Interacts with RssB.</text>
</comment>
<comment type="subcellular location">
    <subcellularLocation>
        <location evidence="1">Cytoplasm</location>
    </subcellularLocation>
</comment>
<comment type="similarity">
    <text evidence="1">Belongs to the IraP family.</text>
</comment>
<feature type="chain" id="PRO_1000164549" description="Anti-adapter protein IraP">
    <location>
        <begin position="1"/>
        <end position="86"/>
    </location>
</feature>
<feature type="coiled-coil region" evidence="1">
    <location>
        <begin position="1"/>
        <end position="36"/>
    </location>
</feature>
<gene>
    <name evidence="1" type="primary">iraP</name>
    <name type="ordered locus">E2348C_0318</name>
</gene>
<accession>B7UJK6</accession>
<sequence length="86" mass="9965">MKNLIAELLFKLAQKEEESKELCAQVEALEIIVTAMLRNMAQNDQQRLIDQVEGALYEVKPDASIPDDDTELLRDYVKKLLRHPRQ</sequence>